<dbReference type="EC" id="2.4.1.21" evidence="4 9"/>
<dbReference type="EMBL" id="AL021713">
    <property type="protein sequence ID" value="CAA16796.1"/>
    <property type="status" value="ALT_SEQ"/>
    <property type="molecule type" value="Genomic_DNA"/>
</dbReference>
<dbReference type="EMBL" id="AL161548">
    <property type="protein sequence ID" value="CAB78826.1"/>
    <property type="status" value="ALT_SEQ"/>
    <property type="molecule type" value="Genomic_DNA"/>
</dbReference>
<dbReference type="EMBL" id="CP002687">
    <property type="protein sequence ID" value="AEE84015.1"/>
    <property type="molecule type" value="Genomic_DNA"/>
</dbReference>
<dbReference type="EMBL" id="AK226610">
    <property type="protein sequence ID" value="BAE98723.1"/>
    <property type="molecule type" value="mRNA"/>
</dbReference>
<dbReference type="PIR" id="T04926">
    <property type="entry name" value="T04926"/>
</dbReference>
<dbReference type="RefSeq" id="NP_193558.3">
    <property type="nucleotide sequence ID" value="NM_117934.4"/>
</dbReference>
<dbReference type="PDB" id="6GNE">
    <property type="method" value="X-ray"/>
    <property type="resolution" value="2.55 A"/>
    <property type="chains" value="A/B=533-1040"/>
</dbReference>
<dbReference type="PDBsum" id="6GNE"/>
<dbReference type="SMR" id="Q0WVX5"/>
<dbReference type="BioGRID" id="12843">
    <property type="interactions" value="8"/>
</dbReference>
<dbReference type="FunCoup" id="Q0WVX5">
    <property type="interactions" value="1046"/>
</dbReference>
<dbReference type="STRING" id="3702.Q0WVX5"/>
<dbReference type="CAZy" id="GT5">
    <property type="family name" value="Glycosyltransferase Family 5"/>
</dbReference>
<dbReference type="PaxDb" id="3702-AT4G18240.1"/>
<dbReference type="ProteomicsDB" id="228261"/>
<dbReference type="EnsemblPlants" id="AT4G18240.1">
    <property type="protein sequence ID" value="AT4G18240.1"/>
    <property type="gene ID" value="AT4G18240"/>
</dbReference>
<dbReference type="GeneID" id="827550"/>
<dbReference type="Gramene" id="AT4G18240.1">
    <property type="protein sequence ID" value="AT4G18240.1"/>
    <property type="gene ID" value="AT4G18240"/>
</dbReference>
<dbReference type="KEGG" id="ath:AT4G18240"/>
<dbReference type="Araport" id="AT4G18240"/>
<dbReference type="TAIR" id="AT4G18240">
    <property type="gene designation" value="SS4"/>
</dbReference>
<dbReference type="eggNOG" id="ENOG502QQTU">
    <property type="taxonomic scope" value="Eukaryota"/>
</dbReference>
<dbReference type="HOGENOM" id="CLU_007243_0_0_1"/>
<dbReference type="InParanoid" id="Q0WVX5"/>
<dbReference type="OMA" id="ANDRINP"/>
<dbReference type="OrthoDB" id="2018403at2759"/>
<dbReference type="PhylomeDB" id="Q0WVX5"/>
<dbReference type="BRENDA" id="2.4.1.21">
    <property type="organism ID" value="399"/>
</dbReference>
<dbReference type="UniPathway" id="UPA00152"/>
<dbReference type="PRO" id="PR:Q0WVX5"/>
<dbReference type="Proteomes" id="UP000006548">
    <property type="component" value="Chromosome 4"/>
</dbReference>
<dbReference type="ExpressionAtlas" id="Q0WVX5">
    <property type="expression patterns" value="baseline and differential"/>
</dbReference>
<dbReference type="GO" id="GO:0009501">
    <property type="term" value="C:amyloplast"/>
    <property type="evidence" value="ECO:0007669"/>
    <property type="project" value="UniProtKB-SubCell"/>
</dbReference>
<dbReference type="GO" id="GO:0009507">
    <property type="term" value="C:chloroplast"/>
    <property type="evidence" value="ECO:0000314"/>
    <property type="project" value="TAIR"/>
</dbReference>
<dbReference type="GO" id="GO:0009570">
    <property type="term" value="C:chloroplast stroma"/>
    <property type="evidence" value="ECO:0007669"/>
    <property type="project" value="UniProtKB-SubCell"/>
</dbReference>
<dbReference type="GO" id="GO:0009011">
    <property type="term" value="F:alpha-1,4-glucan glucosyltransferase (ADP-glucose donor) activity"/>
    <property type="evidence" value="ECO:0000315"/>
    <property type="project" value="TAIR"/>
</dbReference>
<dbReference type="GO" id="GO:0004373">
    <property type="term" value="F:alpha-1,4-glucan glucosyltransferase (UDP-glucose donor) activity"/>
    <property type="evidence" value="ECO:0007669"/>
    <property type="project" value="InterPro"/>
</dbReference>
<dbReference type="GO" id="GO:0019252">
    <property type="term" value="P:starch biosynthetic process"/>
    <property type="evidence" value="ECO:0007669"/>
    <property type="project" value="UniProtKB-UniPathway"/>
</dbReference>
<dbReference type="GO" id="GO:0005982">
    <property type="term" value="P:starch metabolic process"/>
    <property type="evidence" value="ECO:0000315"/>
    <property type="project" value="TAIR"/>
</dbReference>
<dbReference type="CDD" id="cd03791">
    <property type="entry name" value="GT5_Glycogen_synthase_DULL1-like"/>
    <property type="match status" value="1"/>
</dbReference>
<dbReference type="FunFam" id="3.40.50.2000:FF:000260">
    <property type="entry name" value="Starch synthase, chloroplastic/amyloplastic"/>
    <property type="match status" value="1"/>
</dbReference>
<dbReference type="Gene3D" id="3.40.50.2000">
    <property type="entry name" value="Glycogen Phosphorylase B"/>
    <property type="match status" value="2"/>
</dbReference>
<dbReference type="HAMAP" id="MF_00484">
    <property type="entry name" value="Glycogen_synth"/>
    <property type="match status" value="1"/>
</dbReference>
<dbReference type="InterPro" id="IPR011835">
    <property type="entry name" value="GS/SS"/>
</dbReference>
<dbReference type="InterPro" id="IPR013534">
    <property type="entry name" value="Starch_synth_cat_dom"/>
</dbReference>
<dbReference type="NCBIfam" id="TIGR02095">
    <property type="entry name" value="glgA"/>
    <property type="match status" value="1"/>
</dbReference>
<dbReference type="NCBIfam" id="NF001905">
    <property type="entry name" value="PRK00654.2-4"/>
    <property type="match status" value="1"/>
</dbReference>
<dbReference type="PANTHER" id="PTHR46083">
    <property type="match status" value="1"/>
</dbReference>
<dbReference type="PANTHER" id="PTHR46083:SF2">
    <property type="entry name" value="STARCH SYNTHASE 4, CHLOROPLASTIC_AMYLOPLASTIC-RELATED"/>
    <property type="match status" value="1"/>
</dbReference>
<dbReference type="Pfam" id="PF13692">
    <property type="entry name" value="Glyco_trans_1_4"/>
    <property type="match status" value="1"/>
</dbReference>
<dbReference type="Pfam" id="PF08323">
    <property type="entry name" value="Glyco_transf_5"/>
    <property type="match status" value="1"/>
</dbReference>
<dbReference type="SUPFAM" id="SSF53756">
    <property type="entry name" value="UDP-Glycosyltransferase/glycogen phosphorylase"/>
    <property type="match status" value="1"/>
</dbReference>
<protein>
    <recommendedName>
        <fullName evidence="13">Probable starch synthase 4, chloroplastic/amyloplastic</fullName>
        <shortName evidence="10">AtSS4</shortName>
        <ecNumber evidence="4 9">2.4.1.21</ecNumber>
    </recommendedName>
    <alternativeName>
        <fullName evidence="10">Soluble starch synthase IV</fullName>
        <shortName evidence="10 12">SSIV</shortName>
    </alternativeName>
</protein>
<accession>Q0WVX5</accession>
<accession>O49727</accession>
<organism>
    <name type="scientific">Arabidopsis thaliana</name>
    <name type="common">Mouse-ear cress</name>
    <dbReference type="NCBI Taxonomy" id="3702"/>
    <lineage>
        <taxon>Eukaryota</taxon>
        <taxon>Viridiplantae</taxon>
        <taxon>Streptophyta</taxon>
        <taxon>Embryophyta</taxon>
        <taxon>Tracheophyta</taxon>
        <taxon>Spermatophyta</taxon>
        <taxon>Magnoliopsida</taxon>
        <taxon>eudicotyledons</taxon>
        <taxon>Gunneridae</taxon>
        <taxon>Pentapetalae</taxon>
        <taxon>rosids</taxon>
        <taxon>malvids</taxon>
        <taxon>Brassicales</taxon>
        <taxon>Brassicaceae</taxon>
        <taxon>Camelineae</taxon>
        <taxon>Arabidopsis</taxon>
    </lineage>
</organism>
<feature type="transit peptide" description="Chloroplast" evidence="1">
    <location>
        <begin position="1"/>
        <end position="42"/>
    </location>
</feature>
<feature type="chain" id="PRO_0000419771" description="Probable starch synthase 4, chloroplastic/amyloplastic">
    <location>
        <begin position="43"/>
        <end position="1040"/>
    </location>
</feature>
<feature type="region of interest" description="Disordered" evidence="2">
    <location>
        <begin position="43"/>
        <end position="142"/>
    </location>
</feature>
<feature type="coiled-coil region" evidence="1">
    <location>
        <begin position="187"/>
        <end position="466"/>
    </location>
</feature>
<feature type="compositionally biased region" description="Basic and acidic residues" evidence="2">
    <location>
        <begin position="52"/>
        <end position="61"/>
    </location>
</feature>
<feature type="compositionally biased region" description="Basic and acidic residues" evidence="2">
    <location>
        <begin position="112"/>
        <end position="124"/>
    </location>
</feature>
<feature type="binding site" evidence="9 17">
    <location>
        <position position="556"/>
    </location>
    <ligand>
        <name>ADP</name>
        <dbReference type="ChEBI" id="CHEBI:456216"/>
    </ligand>
</feature>
<feature type="binding site" evidence="9 17">
    <location>
        <position position="559"/>
    </location>
    <ligand>
        <name>ADP</name>
        <dbReference type="ChEBI" id="CHEBI:456216"/>
    </ligand>
</feature>
<feature type="binding site" evidence="9 17">
    <location>
        <position position="562"/>
    </location>
    <ligand>
        <name>ADP</name>
        <dbReference type="ChEBI" id="CHEBI:456216"/>
    </ligand>
</feature>
<feature type="binding site" evidence="9 17">
    <location>
        <position position="679"/>
    </location>
    <ligand>
        <name>(1,4-alpha-D-glucosyl)n</name>
        <dbReference type="ChEBI" id="CHEBI:15444"/>
    </ligand>
</feature>
<feature type="binding site" evidence="9 17">
    <location>
        <position position="680"/>
    </location>
    <ligand>
        <name>(1,4-alpha-D-glucosyl)n</name>
        <dbReference type="ChEBI" id="CHEBI:15444"/>
    </ligand>
</feature>
<feature type="binding site" evidence="9 17">
    <location>
        <position position="849"/>
    </location>
    <ligand>
        <name>ADP</name>
        <dbReference type="ChEBI" id="CHEBI:456216"/>
    </ligand>
</feature>
<feature type="binding site" evidence="9 17">
    <location>
        <position position="854"/>
    </location>
    <ligand>
        <name>ADP</name>
        <dbReference type="ChEBI" id="CHEBI:456216"/>
    </ligand>
</feature>
<feature type="binding site" evidence="9 17">
    <location>
        <position position="906"/>
    </location>
    <ligand>
        <name>ADP</name>
        <dbReference type="ChEBI" id="CHEBI:456216"/>
    </ligand>
</feature>
<feature type="binding site" evidence="9 17">
    <location>
        <position position="908"/>
    </location>
    <ligand>
        <name>ADP</name>
        <dbReference type="ChEBI" id="CHEBI:456216"/>
    </ligand>
</feature>
<feature type="binding site" evidence="9 17">
    <location>
        <position position="916"/>
    </location>
    <ligand>
        <name>ADP</name>
        <dbReference type="ChEBI" id="CHEBI:456216"/>
    </ligand>
</feature>
<feature type="binding site" evidence="9 17">
    <location>
        <position position="933"/>
    </location>
    <ligand>
        <name>ADP</name>
        <dbReference type="ChEBI" id="CHEBI:456216"/>
    </ligand>
</feature>
<feature type="binding site" evidence="9 17">
    <location>
        <position position="934"/>
    </location>
    <ligand>
        <name>ADP</name>
        <dbReference type="ChEBI" id="CHEBI:456216"/>
    </ligand>
</feature>
<feature type="strand" evidence="18">
    <location>
        <begin position="543"/>
        <end position="547"/>
    </location>
</feature>
<feature type="turn" evidence="18">
    <location>
        <begin position="552"/>
        <end position="554"/>
    </location>
</feature>
<feature type="helix" evidence="18">
    <location>
        <begin position="559"/>
        <end position="573"/>
    </location>
</feature>
<feature type="strand" evidence="18">
    <location>
        <begin position="577"/>
        <end position="583"/>
    </location>
</feature>
<feature type="helix" evidence="18">
    <location>
        <begin position="590"/>
        <end position="592"/>
    </location>
</feature>
<feature type="strand" evidence="18">
    <location>
        <begin position="593"/>
        <end position="607"/>
    </location>
</feature>
<feature type="strand" evidence="18">
    <location>
        <begin position="610"/>
        <end position="621"/>
    </location>
</feature>
<feature type="strand" evidence="18">
    <location>
        <begin position="624"/>
        <end position="632"/>
    </location>
</feature>
<feature type="helix" evidence="18">
    <location>
        <begin position="649"/>
        <end position="666"/>
    </location>
</feature>
<feature type="strand" evidence="18">
    <location>
        <begin position="672"/>
        <end position="677"/>
    </location>
</feature>
<feature type="helix" evidence="18">
    <location>
        <begin position="678"/>
        <end position="682"/>
    </location>
</feature>
<feature type="helix" evidence="18">
    <location>
        <begin position="684"/>
        <end position="691"/>
    </location>
</feature>
<feature type="helix" evidence="18">
    <location>
        <begin position="693"/>
        <end position="695"/>
    </location>
</feature>
<feature type="strand" evidence="18">
    <location>
        <begin position="701"/>
        <end position="707"/>
    </location>
</feature>
<feature type="helix" evidence="18">
    <location>
        <begin position="717"/>
        <end position="721"/>
    </location>
</feature>
<feature type="turn" evidence="18">
    <location>
        <begin position="722"/>
        <end position="724"/>
    </location>
</feature>
<feature type="helix" evidence="18">
    <location>
        <begin position="727"/>
        <end position="730"/>
    </location>
</feature>
<feature type="turn" evidence="18">
    <location>
        <begin position="733"/>
        <end position="736"/>
    </location>
</feature>
<feature type="strand" evidence="18">
    <location>
        <begin position="742"/>
        <end position="745"/>
    </location>
</feature>
<feature type="helix" evidence="18">
    <location>
        <begin position="747"/>
        <end position="754"/>
    </location>
</feature>
<feature type="strand" evidence="18">
    <location>
        <begin position="756"/>
        <end position="761"/>
    </location>
</feature>
<feature type="helix" evidence="18">
    <location>
        <begin position="763"/>
        <end position="770"/>
    </location>
</feature>
<feature type="helix" evidence="18">
    <location>
        <begin position="772"/>
        <end position="775"/>
    </location>
</feature>
<feature type="helix" evidence="18">
    <location>
        <begin position="779"/>
        <end position="784"/>
    </location>
</feature>
<feature type="helix" evidence="18">
    <location>
        <begin position="786"/>
        <end position="788"/>
    </location>
</feature>
<feature type="strand" evidence="18">
    <location>
        <begin position="789"/>
        <end position="791"/>
    </location>
</feature>
<feature type="turn" evidence="18">
    <location>
        <begin position="798"/>
        <end position="800"/>
    </location>
</feature>
<feature type="turn" evidence="18">
    <location>
        <begin position="803"/>
        <end position="805"/>
    </location>
</feature>
<feature type="strand" evidence="18">
    <location>
        <begin position="809"/>
        <end position="811"/>
    </location>
</feature>
<feature type="helix" evidence="18">
    <location>
        <begin position="819"/>
        <end position="832"/>
    </location>
</feature>
<feature type="strand" evidence="18">
    <location>
        <begin position="837"/>
        <end position="840"/>
    </location>
</feature>
<feature type="strand" evidence="18">
    <location>
        <begin position="843"/>
        <end position="849"/>
    </location>
</feature>
<feature type="helix" evidence="18">
    <location>
        <begin position="852"/>
        <end position="854"/>
    </location>
</feature>
<feature type="helix" evidence="18">
    <location>
        <begin position="856"/>
        <end position="868"/>
    </location>
</feature>
<feature type="strand" evidence="18">
    <location>
        <begin position="872"/>
        <end position="878"/>
    </location>
</feature>
<feature type="helix" evidence="18">
    <location>
        <begin position="882"/>
        <end position="894"/>
    </location>
</feature>
<feature type="turn" evidence="18">
    <location>
        <begin position="895"/>
        <end position="897"/>
    </location>
</feature>
<feature type="strand" evidence="18">
    <location>
        <begin position="899"/>
        <end position="904"/>
    </location>
</feature>
<feature type="helix" evidence="18">
    <location>
        <begin position="909"/>
        <end position="918"/>
    </location>
</feature>
<feature type="strand" evidence="18">
    <location>
        <begin position="920"/>
        <end position="924"/>
    </location>
</feature>
<feature type="helix" evidence="18">
    <location>
        <begin position="934"/>
        <end position="940"/>
    </location>
</feature>
<feature type="strand" evidence="18">
    <location>
        <begin position="944"/>
        <end position="950"/>
    </location>
</feature>
<feature type="helix" evidence="18">
    <location>
        <begin position="951"/>
        <end position="956"/>
    </location>
</feature>
<feature type="turn" evidence="18">
    <location>
        <begin position="967"/>
        <end position="969"/>
    </location>
</feature>
<feature type="strand" evidence="18">
    <location>
        <begin position="972"/>
        <end position="979"/>
    </location>
</feature>
<feature type="helix" evidence="18">
    <location>
        <begin position="980"/>
        <end position="996"/>
    </location>
</feature>
<feature type="helix" evidence="18">
    <location>
        <begin position="998"/>
        <end position="1009"/>
    </location>
</feature>
<feature type="helix" evidence="18">
    <location>
        <begin position="1016"/>
        <end position="1031"/>
    </location>
</feature>
<comment type="function">
    <text evidence="3 4 5">Probably involved in the priming of starch granule formation. May play a regulatory role in the control of starch accumulation in plastids. Is necessary and sufficient to establish the correct number of starch granules observed in chloroplasts.</text>
</comment>
<comment type="catalytic activity">
    <reaction evidence="4 9">
        <text>[(1-&gt;4)-alpha-D-glucosyl](n) + ADP-alpha-D-glucose = [(1-&gt;4)-alpha-D-glucosyl](n+1) + ADP + H(+)</text>
        <dbReference type="Rhea" id="RHEA:18189"/>
        <dbReference type="Rhea" id="RHEA-COMP:9584"/>
        <dbReference type="Rhea" id="RHEA-COMP:9587"/>
        <dbReference type="ChEBI" id="CHEBI:15378"/>
        <dbReference type="ChEBI" id="CHEBI:15444"/>
        <dbReference type="ChEBI" id="CHEBI:57498"/>
        <dbReference type="ChEBI" id="CHEBI:456216"/>
        <dbReference type="EC" id="2.4.1.21"/>
    </reaction>
</comment>
<comment type="biophysicochemical properties">
    <kinetics>
        <Vmax evidence="9">3.48 umol/min/mg enzyme with maltose as substrate</Vmax>
        <Vmax evidence="9">19.81 umol/min/mg enzyme with maltotriose as substrate</Vmax>
        <Vmax evidence="9">17.39 umol/min/mg enzyme with maltotetraose as substrate</Vmax>
        <Vmax evidence="9">15.13 umol/min/mg enzyme with maltopentaose as substrate</Vmax>
        <Vmax evidence="9">16.31 umol/min/mg enzyme with maltohexaose as substrate</Vmax>
        <Vmax evidence="9">15.13 umol/min/mg enzyme with maltoheptaose as substrate</Vmax>
        <Vmax evidence="9">16.31 umol/min/mg enzyme with maltooctaose as substrate</Vmax>
        <Vmax evidence="9">0.074 umol/min/mg enzyme with soluble potato starch as substrate</Vmax>
        <Vmax evidence="9">0.27 umol/min/mg enzyme with glycogen as substrate</Vmax>
        <Vmax evidence="9">0.72 umol/min/mg enzyme with maize amylopectin as substrate</Vmax>
    </kinetics>
</comment>
<comment type="pathway">
    <text evidence="13">Glycan biosynthesis; starch biosynthesis.</text>
</comment>
<comment type="subunit">
    <text evidence="6 8">Interacts with PTST2 (PubMed:28684429). Interacts with PII1; the interaction is essential for the initiation of starch granules biosynthesis in leaf chloroplasts (PubMed:30055112).</text>
</comment>
<comment type="subcellular location">
    <subcellularLocation>
        <location evidence="5 7 8">Plastid</location>
        <location evidence="5 7 8">Chloroplast</location>
    </subcellularLocation>
    <subcellularLocation>
        <location evidence="4 5">Plastid</location>
        <location evidence="4 5">Amyloplast</location>
    </subcellularLocation>
    <subcellularLocation>
        <location evidence="7">Plastid</location>
        <location evidence="7">Chloroplast stroma</location>
    </subcellularLocation>
</comment>
<comment type="tissue specificity">
    <text evidence="3">Expressed in leaves and flowers.</text>
</comment>
<comment type="disruption phenotype">
    <text evidence="3 7 8">Severely reduced growth, reduced number of starch granules and altered structure of starch granules (PubMed:17217470, PubMed:30055112). Significant loss of starch at the end of the day in the center of 4-week old rosettes (PubMed:29866647, PubMed:30055112). Changes in starch turnover pattern with a reduction of both starch synthesis and degradation rates (PubMed:30055112). Loss of starch granules in over 50% of chloroplast sections (PubMed:29866647). Larger chloroplast starch granules than wild-type (PubMed:29866647, PubMed:30055112). Starch-free chloroplasts in association with massive accumulation of unused ADP-glucose in chloroplasts of the cells from the proximal region of the leaves, but chloroplasts of the cells from the distal section of the leaves accumulate one starch granule (PubMed:30055112).</text>
</comment>
<comment type="miscellaneous">
    <text evidence="14">Plants over-expressing SS4 have increased levels of starch in leaves and display a higher growth rate than wild-type.</text>
</comment>
<comment type="similarity">
    <text evidence="13">Belongs to the glycosyltransferase 1 family. Bacterial/plant glycogen synthase subfamily.</text>
</comment>
<comment type="sequence caution" evidence="13">
    <conflict type="erroneous gene model prediction">
        <sequence resource="EMBL-CDS" id="CAA16796"/>
    </conflict>
</comment>
<comment type="sequence caution" evidence="13">
    <conflict type="erroneous gene model prediction">
        <sequence resource="EMBL-CDS" id="CAB78826"/>
    </conflict>
</comment>
<name>SSY4_ARATH</name>
<keyword id="KW-0002">3D-structure</keyword>
<keyword id="KW-0035">Amyloplast</keyword>
<keyword id="KW-0150">Chloroplast</keyword>
<keyword id="KW-0175">Coiled coil</keyword>
<keyword id="KW-0328">Glycosyltransferase</keyword>
<keyword id="KW-0934">Plastid</keyword>
<keyword id="KW-1185">Reference proteome</keyword>
<keyword id="KW-0750">Starch biosynthesis</keyword>
<keyword id="KW-0808">Transferase</keyword>
<keyword id="KW-0809">Transit peptide</keyword>
<reference key="1">
    <citation type="journal article" date="1999" name="Nature">
        <title>Sequence and analysis of chromosome 4 of the plant Arabidopsis thaliana.</title>
        <authorList>
            <person name="Mayer K.F.X."/>
            <person name="Schueller C."/>
            <person name="Wambutt R."/>
            <person name="Murphy G."/>
            <person name="Volckaert G."/>
            <person name="Pohl T."/>
            <person name="Duesterhoeft A."/>
            <person name="Stiekema W."/>
            <person name="Entian K.-D."/>
            <person name="Terryn N."/>
            <person name="Harris B."/>
            <person name="Ansorge W."/>
            <person name="Brandt P."/>
            <person name="Grivell L.A."/>
            <person name="Rieger M."/>
            <person name="Weichselgartner M."/>
            <person name="de Simone V."/>
            <person name="Obermaier B."/>
            <person name="Mache R."/>
            <person name="Mueller M."/>
            <person name="Kreis M."/>
            <person name="Delseny M."/>
            <person name="Puigdomenech P."/>
            <person name="Watson M."/>
            <person name="Schmidtheini T."/>
            <person name="Reichert B."/>
            <person name="Portetelle D."/>
            <person name="Perez-Alonso M."/>
            <person name="Boutry M."/>
            <person name="Bancroft I."/>
            <person name="Vos P."/>
            <person name="Hoheisel J."/>
            <person name="Zimmermann W."/>
            <person name="Wedler H."/>
            <person name="Ridley P."/>
            <person name="Langham S.-A."/>
            <person name="McCullagh B."/>
            <person name="Bilham L."/>
            <person name="Robben J."/>
            <person name="van der Schueren J."/>
            <person name="Grymonprez B."/>
            <person name="Chuang Y.-J."/>
            <person name="Vandenbussche F."/>
            <person name="Braeken M."/>
            <person name="Weltjens I."/>
            <person name="Voet M."/>
            <person name="Bastiaens I."/>
            <person name="Aert R."/>
            <person name="Defoor E."/>
            <person name="Weitzenegger T."/>
            <person name="Bothe G."/>
            <person name="Ramsperger U."/>
            <person name="Hilbert H."/>
            <person name="Braun M."/>
            <person name="Holzer E."/>
            <person name="Brandt A."/>
            <person name="Peters S."/>
            <person name="van Staveren M."/>
            <person name="Dirkse W."/>
            <person name="Mooijman P."/>
            <person name="Klein Lankhorst R."/>
            <person name="Rose M."/>
            <person name="Hauf J."/>
            <person name="Koetter P."/>
            <person name="Berneiser S."/>
            <person name="Hempel S."/>
            <person name="Feldpausch M."/>
            <person name="Lamberth S."/>
            <person name="Van den Daele H."/>
            <person name="De Keyser A."/>
            <person name="Buysshaert C."/>
            <person name="Gielen J."/>
            <person name="Villarroel R."/>
            <person name="De Clercq R."/>
            <person name="van Montagu M."/>
            <person name="Rogers J."/>
            <person name="Cronin A."/>
            <person name="Quail M.A."/>
            <person name="Bray-Allen S."/>
            <person name="Clark L."/>
            <person name="Doggett J."/>
            <person name="Hall S."/>
            <person name="Kay M."/>
            <person name="Lennard N."/>
            <person name="McLay K."/>
            <person name="Mayes R."/>
            <person name="Pettett A."/>
            <person name="Rajandream M.A."/>
            <person name="Lyne M."/>
            <person name="Benes V."/>
            <person name="Rechmann S."/>
            <person name="Borkova D."/>
            <person name="Bloecker H."/>
            <person name="Scharfe M."/>
            <person name="Grimm M."/>
            <person name="Loehnert T.-H."/>
            <person name="Dose S."/>
            <person name="de Haan M."/>
            <person name="Maarse A.C."/>
            <person name="Schaefer M."/>
            <person name="Mueller-Auer S."/>
            <person name="Gabel C."/>
            <person name="Fuchs M."/>
            <person name="Fartmann B."/>
            <person name="Granderath K."/>
            <person name="Dauner D."/>
            <person name="Herzl A."/>
            <person name="Neumann S."/>
            <person name="Argiriou A."/>
            <person name="Vitale D."/>
            <person name="Liguori R."/>
            <person name="Piravandi E."/>
            <person name="Massenet O."/>
            <person name="Quigley F."/>
            <person name="Clabauld G."/>
            <person name="Muendlein A."/>
            <person name="Felber R."/>
            <person name="Schnabl S."/>
            <person name="Hiller R."/>
            <person name="Schmidt W."/>
            <person name="Lecharny A."/>
            <person name="Aubourg S."/>
            <person name="Chefdor F."/>
            <person name="Cooke R."/>
            <person name="Berger C."/>
            <person name="Monfort A."/>
            <person name="Casacuberta E."/>
            <person name="Gibbons T."/>
            <person name="Weber N."/>
            <person name="Vandenbol M."/>
            <person name="Bargues M."/>
            <person name="Terol J."/>
            <person name="Torres A."/>
            <person name="Perez-Perez A."/>
            <person name="Purnelle B."/>
            <person name="Bent E."/>
            <person name="Johnson S."/>
            <person name="Tacon D."/>
            <person name="Jesse T."/>
            <person name="Heijnen L."/>
            <person name="Schwarz S."/>
            <person name="Scholler P."/>
            <person name="Heber S."/>
            <person name="Francs P."/>
            <person name="Bielke C."/>
            <person name="Frishman D."/>
            <person name="Haase D."/>
            <person name="Lemcke K."/>
            <person name="Mewes H.-W."/>
            <person name="Stocker S."/>
            <person name="Zaccaria P."/>
            <person name="Bevan M."/>
            <person name="Wilson R.K."/>
            <person name="de la Bastide M."/>
            <person name="Habermann K."/>
            <person name="Parnell L."/>
            <person name="Dedhia N."/>
            <person name="Gnoj L."/>
            <person name="Schutz K."/>
            <person name="Huang E."/>
            <person name="Spiegel L."/>
            <person name="Sekhon M."/>
            <person name="Murray J."/>
            <person name="Sheet P."/>
            <person name="Cordes M."/>
            <person name="Abu-Threideh J."/>
            <person name="Stoneking T."/>
            <person name="Kalicki J."/>
            <person name="Graves T."/>
            <person name="Harmon G."/>
            <person name="Edwards J."/>
            <person name="Latreille P."/>
            <person name="Courtney L."/>
            <person name="Cloud J."/>
            <person name="Abbott A."/>
            <person name="Scott K."/>
            <person name="Johnson D."/>
            <person name="Minx P."/>
            <person name="Bentley D."/>
            <person name="Fulton B."/>
            <person name="Miller N."/>
            <person name="Greco T."/>
            <person name="Kemp K."/>
            <person name="Kramer J."/>
            <person name="Fulton L."/>
            <person name="Mardis E."/>
            <person name="Dante M."/>
            <person name="Pepin K."/>
            <person name="Hillier L.W."/>
            <person name="Nelson J."/>
            <person name="Spieth J."/>
            <person name="Ryan E."/>
            <person name="Andrews S."/>
            <person name="Geisel C."/>
            <person name="Layman D."/>
            <person name="Du H."/>
            <person name="Ali J."/>
            <person name="Berghoff A."/>
            <person name="Jones K."/>
            <person name="Drone K."/>
            <person name="Cotton M."/>
            <person name="Joshu C."/>
            <person name="Antonoiu B."/>
            <person name="Zidanic M."/>
            <person name="Strong C."/>
            <person name="Sun H."/>
            <person name="Lamar B."/>
            <person name="Yordan C."/>
            <person name="Ma P."/>
            <person name="Zhong J."/>
            <person name="Preston R."/>
            <person name="Vil D."/>
            <person name="Shekher M."/>
            <person name="Matero A."/>
            <person name="Shah R."/>
            <person name="Swaby I.K."/>
            <person name="O'Shaughnessy A."/>
            <person name="Rodriguez M."/>
            <person name="Hoffman J."/>
            <person name="Till S."/>
            <person name="Granat S."/>
            <person name="Shohdy N."/>
            <person name="Hasegawa A."/>
            <person name="Hameed A."/>
            <person name="Lodhi M."/>
            <person name="Johnson A."/>
            <person name="Chen E."/>
            <person name="Marra M.A."/>
            <person name="Martienssen R."/>
            <person name="McCombie W.R."/>
        </authorList>
    </citation>
    <scope>NUCLEOTIDE SEQUENCE [LARGE SCALE GENOMIC DNA]</scope>
    <source>
        <strain>cv. Columbia</strain>
    </source>
</reference>
<reference key="2">
    <citation type="journal article" date="2017" name="Plant J.">
        <title>Araport11: a complete reannotation of the Arabidopsis thaliana reference genome.</title>
        <authorList>
            <person name="Cheng C.Y."/>
            <person name="Krishnakumar V."/>
            <person name="Chan A.P."/>
            <person name="Thibaud-Nissen F."/>
            <person name="Schobel S."/>
            <person name="Town C.D."/>
        </authorList>
    </citation>
    <scope>GENOME REANNOTATION</scope>
    <source>
        <strain>cv. Columbia</strain>
    </source>
</reference>
<reference key="3">
    <citation type="submission" date="2006-07" db="EMBL/GenBank/DDBJ databases">
        <title>Large-scale analysis of RIKEN Arabidopsis full-length (RAFL) cDNAs.</title>
        <authorList>
            <person name="Totoki Y."/>
            <person name="Seki M."/>
            <person name="Ishida J."/>
            <person name="Nakajima M."/>
            <person name="Enju A."/>
            <person name="Kamiya A."/>
            <person name="Narusaka M."/>
            <person name="Shin-i T."/>
            <person name="Nakagawa M."/>
            <person name="Sakamoto N."/>
            <person name="Oishi K."/>
            <person name="Kohara Y."/>
            <person name="Kobayashi M."/>
            <person name="Toyoda A."/>
            <person name="Sakaki Y."/>
            <person name="Sakurai T."/>
            <person name="Iida K."/>
            <person name="Akiyama K."/>
            <person name="Satou M."/>
            <person name="Toyoda T."/>
            <person name="Konagaya A."/>
            <person name="Carninci P."/>
            <person name="Kawai J."/>
            <person name="Hayashizaki Y."/>
            <person name="Shinozaki K."/>
        </authorList>
    </citation>
    <scope>NUCLEOTIDE SEQUENCE [LARGE SCALE MRNA]</scope>
    <source>
        <strain>cv. Columbia</strain>
    </source>
</reference>
<reference key="4">
    <citation type="journal article" date="2007" name="Plant J.">
        <title>The phenotype of soluble starch synthase IV defective mutants of Arabidopsis thaliana suggests a novel function of elongation enzymes in the control of starch granule formation.</title>
        <authorList>
            <person name="Roldan I."/>
            <person name="Wattebled F."/>
            <person name="Mercedes Lucas M."/>
            <person name="Delvalle D."/>
            <person name="Planchot V."/>
            <person name="Jimenez S."/>
            <person name="Perez R."/>
            <person name="Ball S."/>
            <person name="D'Hulst C."/>
            <person name="Merida A."/>
        </authorList>
    </citation>
    <scope>FUNCTION</scope>
    <scope>TISSUE SPECIFICITY</scope>
    <scope>DISRUPTION PHENOTYPE</scope>
    <source>
        <strain>cv. Columbia</strain>
    </source>
</reference>
<reference key="5">
    <citation type="journal article" date="2009" name="Plant Cell">
        <title>Starch granule initiation in Arabidopsis requires the presence of either class IV or class III starch synthases.</title>
        <authorList>
            <person name="Szydlowski N."/>
            <person name="Ragel P."/>
            <person name="Raynaud S."/>
            <person name="Lucas M.M."/>
            <person name="Roldan I."/>
            <person name="Montero M."/>
            <person name="Munoz F.J."/>
            <person name="Ovecka M."/>
            <person name="Bahaji A."/>
            <person name="Planchot V."/>
            <person name="Pozueta-Romero J."/>
            <person name="D'Hulst C."/>
            <person name="Merida A."/>
        </authorList>
    </citation>
    <scope>FUNCTION</scope>
    <scope>CATALYTIC ACTIVITY</scope>
    <scope>SUBCELLULAR LOCATION</scope>
</reference>
<reference key="6">
    <citation type="journal article" date="2011" name="Plant Biotechnol. J.">
        <title>Enhancing the expression of starch synthase class IV results in increased levels of both transitory and long-term storage starch.</title>
        <authorList>
            <person name="Gamez-Arjona F.M."/>
            <person name="Li J."/>
            <person name="Raynaud S."/>
            <person name="Baroja-Fernandez E."/>
            <person name="Munoz F.J."/>
            <person name="Ovecka M."/>
            <person name="Ragel P."/>
            <person name="Bahaji A."/>
            <person name="Pozueta-Romero J."/>
            <person name="Merida A."/>
        </authorList>
    </citation>
    <scope>FUNCTION</scope>
    <scope>SUBCELLULAR LOCATION</scope>
</reference>
<reference key="7">
    <citation type="journal article" date="2017" name="Plant Cell">
        <title>Homologs of PROTEIN TARGETING TO STARCH control starch granule initiation in Arabidopsis Leaves.</title>
        <authorList>
            <person name="Seung D."/>
            <person name="Boudet J."/>
            <person name="Monroe J."/>
            <person name="Schreier T.B."/>
            <person name="David L.C."/>
            <person name="Abt M."/>
            <person name="Lu K.J."/>
            <person name="Zanella M."/>
            <person name="Zeeman S.C."/>
        </authorList>
    </citation>
    <scope>INTERACTION WITH PTST2</scope>
</reference>
<reference key="8">
    <citation type="journal article" date="2018" name="Plant Cell">
        <title>Two Plastidial Coiled-Coil Proteins Are Essential for Normal Starch Granule Initiation in Arabidopsis.</title>
        <authorList>
            <person name="Seung D."/>
            <person name="Schreier T.B."/>
            <person name="Buergy L."/>
            <person name="Eicke S."/>
            <person name="Zeeman S.C."/>
        </authorList>
    </citation>
    <scope>SUBCELLULAR LOCATION</scope>
    <scope>DISRUPTION PHENOTYPE</scope>
</reference>
<reference key="9">
    <citation type="journal article" date="2019" name="New Phytol.">
        <title>PII1: a protein involved in starch initiation that determines granule number and size in Arabidopsis chloroplast.</title>
        <authorList>
            <person name="Vandromme C."/>
            <person name="Spriet C."/>
            <person name="Dauvillee D."/>
            <person name="Courseaux A."/>
            <person name="Putaux J.L."/>
            <person name="Wychowski A."/>
            <person name="Krzewinski F."/>
            <person name="Facon M."/>
            <person name="D'Hulst C."/>
            <person name="Wattebled F."/>
        </authorList>
    </citation>
    <scope>INTERACTION WITH PII1</scope>
    <scope>SUBCELLULAR LOCATION</scope>
    <scope>DISRUPTION PHENOTYPE</scope>
</reference>
<reference key="10">
    <citation type="journal article" date="2018" name="Front. Plant Sci.">
        <title>Crystal Structures of the Catalytic Domain of Arabidopsis thaliana Starch Synthase IV, of Granule Bound Starch Synthase From CLg1 and of Granule Bound Starch Synthase I of Cyanophora paradoxa Illustrate Substrate Recognition in Starch Synthases.</title>
        <authorList>
            <person name="Nielsen M.M."/>
            <person name="Ruzanski C."/>
            <person name="Krucewicz K."/>
            <person name="Striebeck A."/>
            <person name="Cenci U."/>
            <person name="Ball S.G."/>
            <person name="Palcic M.M."/>
            <person name="Cuesta-Seijo J.A."/>
        </authorList>
    </citation>
    <scope>X-RAY CRYSTALLOGRAPHY (2.55 ANGSTROMS) OF 533-1040 IN COMPLEX WITH ACARBOSE INHIBITOR; ADP AND MALTOSE</scope>
    <scope>CATALYTIC ACTIVITY</scope>
    <scope>BIOPHYSICOCHEMICAL PROPERTIES</scope>
</reference>
<sequence>MTTKLSSFCFLTHGLAGISCEREHGSSRRFFYLPSRRLVSTSCKMRQQRGFDSSKRQEVKKGSPKPILSINSGLQSNNDEESDLENGSADSVPSLKSDAEKGSSIHGSIDMNHADENLEKKDDIQTTEVTRRKSKTAKKKGESIHATIDIGHDDGKNLDNITVPEVAKALSLNKSEGEQISDGQFGELMTMIRSAEKNILRLDEARATALDDLNKILSDKEALQGEINVLEMKLSETDERIKTAAQEKAHVELLEEQLEKLRHEMISPIESDGYVLALSKELETLKLENLSLRNDIEMLKSELDSVKDTGERVVVLEKECSGLESSVKDLESKLSVSQEDVSQLSTLKIECTDLWAKVETLQLLLDRATKQAEQAVIVLQQNQDLRNKVDKIEESLKEANVYKESSEKIQQYNELMQHKVTLLEERLEKSDAEIFSYVQLYQESIKEFQETLESLKEESKKKSRDEPVDDMPWDYWSRLLLTVDGWLLEKKIASNDADLLRDMVWKKDRRIHDTYIDVKDKNERDAISAFLKLVSSPTSSGLYVVHIAAEMAPVAKVGGLGDVVAGLGKALQRKGHLVEIILPKYDCMQYDRVRDLRALDTVVESYFDGKLYKNKIWIGTVEGLPVHFIEPQHPSKFFWRGQFYGEQDDFRRFSYFSRAALELLLQSGKKPDIIHCHDWQTAFVAPLYWDLYAPKGLDSARICFTCHNFEYQGTASASELGSCGLDVNQLNRPDRMQDHSSGDRVNPVKGAIIFSNIVTTVSPTYAQEVRTAEGGKGLHSTLNFHSKKFIGILNGIDTDSWNPATDPFLKAQFNAKDLQGKEENKHALRKQLGLSSAESRRPLVGCITRLVPQKGVHLIRHAIYRTLELGGQFVLLGSSPVPHIQREFEGIEQQFKSHDHVRLLLKYDEALSHTIYAASDLFIIPSIFEPCGLTQMIAMRYGSIPIARKTGGLNDSVFDIDDDTIPTQFQNGFTFQTADEQGFNYALERAFNHYKKDEEKWMRLVEKVMSIDFSWGSSATQYEELYTRSVSRARAVPNRT</sequence>
<evidence type="ECO:0000255" key="1"/>
<evidence type="ECO:0000256" key="2">
    <source>
        <dbReference type="SAM" id="MobiDB-lite"/>
    </source>
</evidence>
<evidence type="ECO:0000269" key="3">
    <source>
    </source>
</evidence>
<evidence type="ECO:0000269" key="4">
    <source>
    </source>
</evidence>
<evidence type="ECO:0000269" key="5">
    <source>
    </source>
</evidence>
<evidence type="ECO:0000269" key="6">
    <source>
    </source>
</evidence>
<evidence type="ECO:0000269" key="7">
    <source>
    </source>
</evidence>
<evidence type="ECO:0000269" key="8">
    <source>
    </source>
</evidence>
<evidence type="ECO:0000269" key="9">
    <source>
    </source>
</evidence>
<evidence type="ECO:0000303" key="10">
    <source>
    </source>
</evidence>
<evidence type="ECO:0000303" key="11">
    <source>
    </source>
</evidence>
<evidence type="ECO:0000303" key="12">
    <source>
    </source>
</evidence>
<evidence type="ECO:0000305" key="13"/>
<evidence type="ECO:0000305" key="14">
    <source>
    </source>
</evidence>
<evidence type="ECO:0000312" key="15">
    <source>
        <dbReference type="Araport" id="AT4G18240"/>
    </source>
</evidence>
<evidence type="ECO:0000312" key="16">
    <source>
        <dbReference type="EMBL" id="CAB78826.1"/>
    </source>
</evidence>
<evidence type="ECO:0007744" key="17">
    <source>
        <dbReference type="PDB" id="6GNE"/>
    </source>
</evidence>
<evidence type="ECO:0007829" key="18">
    <source>
        <dbReference type="PDB" id="6GNE"/>
    </source>
</evidence>
<gene>
    <name evidence="10 11" type="primary">SS4</name>
    <name evidence="11 15" type="ordered locus">At4g18240</name>
    <name evidence="16" type="ORF">T9A21.90</name>
</gene>
<proteinExistence type="evidence at protein level"/>